<reference key="1">
    <citation type="journal article" date="2017" name="FEBS J.">
        <title>Structural plasticity of Mini-M conotoxins: expression of all mini-M subtypes by Conus regius.</title>
        <authorList>
            <person name="Franco A."/>
            <person name="Dovell S."/>
            <person name="Moller C."/>
            <person name="Grandal M."/>
            <person name="Clark E."/>
            <person name="Mari F."/>
        </authorList>
    </citation>
    <scope>NUCLEOTIDE SEQUENCE [MRNA]</scope>
    <source>
        <tissue>Venom duct</tissue>
    </source>
</reference>
<proteinExistence type="evidence at transcript level"/>
<sequence length="45" mass="5172">DQPVERHAGNKRHLNPTIRRAMIIDANRREKCCEVGWCDSGCECC</sequence>
<feature type="propeptide" id="PRO_0000444782" evidence="3">
    <location>
        <begin position="1" status="less than"/>
        <end position="31"/>
    </location>
</feature>
<feature type="peptide" id="PRO_0000444783" description="Conotoxin reg3.12" evidence="4">
    <location>
        <begin position="32"/>
        <end position="45"/>
    </location>
</feature>
<feature type="disulfide bond" evidence="1">
    <location>
        <begin position="32"/>
        <end position="44"/>
    </location>
</feature>
<feature type="disulfide bond" evidence="1">
    <location>
        <begin position="33"/>
        <end position="42"/>
    </location>
</feature>
<feature type="disulfide bond" evidence="1">
    <location>
        <begin position="38"/>
        <end position="45"/>
    </location>
</feature>
<feature type="non-terminal residue" evidence="5">
    <location>
        <position position="1"/>
    </location>
</feature>
<accession>A0A2I6EDM9</accession>
<comment type="subcellular location">
    <subcellularLocation>
        <location evidence="4">Secreted</location>
    </subcellularLocation>
</comment>
<comment type="tissue specificity">
    <text evidence="4">Expressed by the venom duct.</text>
</comment>
<comment type="domain">
    <text evidence="3">The cysteine framework is III (CC-C-C-CC). Classified in the M-1 branch, since 1 residue stands between the fourth and the fifth cysteine residues.</text>
</comment>
<comment type="similarity">
    <text evidence="3">Belongs to the conotoxin M superfamily.</text>
</comment>
<protein>
    <recommendedName>
        <fullName evidence="2">Conotoxin reg3.12</fullName>
        <shortName evidence="5">Rg3.12</shortName>
    </recommendedName>
</protein>
<name>CM312_CONRE</name>
<dbReference type="EMBL" id="MF588946">
    <property type="protein sequence ID" value="AUJ88070.1"/>
    <property type="molecule type" value="mRNA"/>
</dbReference>
<dbReference type="GO" id="GO:0005576">
    <property type="term" value="C:extracellular region"/>
    <property type="evidence" value="ECO:0007669"/>
    <property type="project" value="UniProtKB-SubCell"/>
</dbReference>
<dbReference type="GO" id="GO:0090729">
    <property type="term" value="F:toxin activity"/>
    <property type="evidence" value="ECO:0007669"/>
    <property type="project" value="UniProtKB-KW"/>
</dbReference>
<organism>
    <name type="scientific">Conus regius</name>
    <name type="common">Crown cone</name>
    <dbReference type="NCBI Taxonomy" id="101314"/>
    <lineage>
        <taxon>Eukaryota</taxon>
        <taxon>Metazoa</taxon>
        <taxon>Spiralia</taxon>
        <taxon>Lophotrochozoa</taxon>
        <taxon>Mollusca</taxon>
        <taxon>Gastropoda</taxon>
        <taxon>Caenogastropoda</taxon>
        <taxon>Neogastropoda</taxon>
        <taxon>Conoidea</taxon>
        <taxon>Conidae</taxon>
        <taxon>Conus</taxon>
        <taxon>Stephanoconus</taxon>
    </lineage>
</organism>
<evidence type="ECO:0000250" key="1">
    <source>
        <dbReference type="UniProtKB" id="Q5EHP3"/>
    </source>
</evidence>
<evidence type="ECO:0000303" key="2">
    <source>
    </source>
</evidence>
<evidence type="ECO:0000305" key="3"/>
<evidence type="ECO:0000305" key="4">
    <source>
    </source>
</evidence>
<evidence type="ECO:0000312" key="5">
    <source>
        <dbReference type="EMBL" id="AUJ88070.1"/>
    </source>
</evidence>
<keyword id="KW-1015">Disulfide bond</keyword>
<keyword id="KW-0964">Secreted</keyword>
<keyword id="KW-0800">Toxin</keyword>